<feature type="chain" id="PRO_0000277287" description="Biotin carboxyl carrier protein of acetyl-CoA carboxylase">
    <location>
        <begin position="1"/>
        <end position="158"/>
    </location>
</feature>
<feature type="domain" description="Biotinyl-binding" evidence="2">
    <location>
        <begin position="81"/>
        <end position="157"/>
    </location>
</feature>
<feature type="modified residue" description="N6-biotinyllysine" evidence="1 2">
    <location>
        <position position="123"/>
    </location>
</feature>
<organism>
    <name type="scientific">Pyropia yezoensis</name>
    <name type="common">Susabi-nori</name>
    <name type="synonym">Porphyra yezoensis</name>
    <dbReference type="NCBI Taxonomy" id="2788"/>
    <lineage>
        <taxon>Eukaryota</taxon>
        <taxon>Rhodophyta</taxon>
        <taxon>Bangiophyceae</taxon>
        <taxon>Bangiales</taxon>
        <taxon>Bangiaceae</taxon>
        <taxon>Pyropia</taxon>
    </lineage>
</organism>
<evidence type="ECO:0000250" key="1"/>
<evidence type="ECO:0000255" key="2">
    <source>
        <dbReference type="PROSITE-ProRule" id="PRU01066"/>
    </source>
</evidence>
<proteinExistence type="inferred from homology"/>
<comment type="function">
    <text evidence="1">This protein is a component of the acetyl coenzyme A carboxylase complex; first, biotin carboxylase catalyzes the carboxylation of the carrier protein and then the transcarboxylase transfers the carboxyl group to form malonyl-CoA.</text>
</comment>
<comment type="pathway">
    <text>Lipid metabolism; fatty acid biosynthesis.</text>
</comment>
<comment type="subcellular location">
    <subcellularLocation>
        <location>Plastid</location>
        <location>Chloroplast</location>
    </subcellularLocation>
</comment>
<name>BCCP_PYRYE</name>
<dbReference type="EMBL" id="AP006715">
    <property type="protein sequence ID" value="BAE92406.1"/>
    <property type="molecule type" value="Genomic_DNA"/>
</dbReference>
<dbReference type="RefSeq" id="YP_536963.1">
    <property type="nucleotide sequence ID" value="NC_007932.1"/>
</dbReference>
<dbReference type="SMR" id="Q1XDK5"/>
<dbReference type="GeneID" id="3978960"/>
<dbReference type="UniPathway" id="UPA00094"/>
<dbReference type="GO" id="GO:0009317">
    <property type="term" value="C:acetyl-CoA carboxylase complex"/>
    <property type="evidence" value="ECO:0007669"/>
    <property type="project" value="InterPro"/>
</dbReference>
<dbReference type="GO" id="GO:0009507">
    <property type="term" value="C:chloroplast"/>
    <property type="evidence" value="ECO:0007669"/>
    <property type="project" value="UniProtKB-SubCell"/>
</dbReference>
<dbReference type="GO" id="GO:0003989">
    <property type="term" value="F:acetyl-CoA carboxylase activity"/>
    <property type="evidence" value="ECO:0007669"/>
    <property type="project" value="InterPro"/>
</dbReference>
<dbReference type="GO" id="GO:0006633">
    <property type="term" value="P:fatty acid biosynthetic process"/>
    <property type="evidence" value="ECO:0007669"/>
    <property type="project" value="UniProtKB-UniPathway"/>
</dbReference>
<dbReference type="CDD" id="cd06850">
    <property type="entry name" value="biotinyl_domain"/>
    <property type="match status" value="1"/>
</dbReference>
<dbReference type="FunFam" id="2.40.50.100:FF:000003">
    <property type="entry name" value="Acetyl-CoA carboxylase biotin carboxyl carrier protein"/>
    <property type="match status" value="1"/>
</dbReference>
<dbReference type="Gene3D" id="2.40.50.100">
    <property type="match status" value="1"/>
</dbReference>
<dbReference type="InterPro" id="IPR001249">
    <property type="entry name" value="AcCoA_biotinCC"/>
</dbReference>
<dbReference type="InterPro" id="IPR001882">
    <property type="entry name" value="Biotin_BS"/>
</dbReference>
<dbReference type="InterPro" id="IPR050709">
    <property type="entry name" value="Biotin_Carboxyl_Carrier/Decarb"/>
</dbReference>
<dbReference type="InterPro" id="IPR000089">
    <property type="entry name" value="Biotin_lipoyl"/>
</dbReference>
<dbReference type="InterPro" id="IPR011053">
    <property type="entry name" value="Single_hybrid_motif"/>
</dbReference>
<dbReference type="NCBIfam" id="TIGR00531">
    <property type="entry name" value="BCCP"/>
    <property type="match status" value="1"/>
</dbReference>
<dbReference type="PANTHER" id="PTHR45266">
    <property type="entry name" value="OXALOACETATE DECARBOXYLASE ALPHA CHAIN"/>
    <property type="match status" value="1"/>
</dbReference>
<dbReference type="PANTHER" id="PTHR45266:SF3">
    <property type="entry name" value="OXALOACETATE DECARBOXYLASE ALPHA CHAIN"/>
    <property type="match status" value="1"/>
</dbReference>
<dbReference type="Pfam" id="PF00364">
    <property type="entry name" value="Biotin_lipoyl"/>
    <property type="match status" value="1"/>
</dbReference>
<dbReference type="PRINTS" id="PR01071">
    <property type="entry name" value="ACOABIOTINCC"/>
</dbReference>
<dbReference type="SUPFAM" id="SSF51230">
    <property type="entry name" value="Single hybrid motif"/>
    <property type="match status" value="1"/>
</dbReference>
<dbReference type="PROSITE" id="PS00188">
    <property type="entry name" value="BIOTIN"/>
    <property type="match status" value="1"/>
</dbReference>
<dbReference type="PROSITE" id="PS50968">
    <property type="entry name" value="BIOTINYL_LIPOYL"/>
    <property type="match status" value="1"/>
</dbReference>
<reference key="1">
    <citation type="submission" date="2003-11" db="EMBL/GenBank/DDBJ databases">
        <title>Whole genome sequence of Porphyra yezoensis chloroplast.</title>
        <authorList>
            <person name="Kunimoto M."/>
            <person name="Morishima K."/>
            <person name="Yoshikawa M."/>
            <person name="Fukuda S."/>
            <person name="Kobayashi T."/>
            <person name="Kobayashi M."/>
            <person name="Okazaki T."/>
            <person name="Ohara I."/>
            <person name="Nakayama I."/>
        </authorList>
    </citation>
    <scope>NUCLEOTIDE SEQUENCE [LARGE SCALE GENOMIC DNA]</scope>
    <source>
        <strain>U-51</strain>
    </source>
</reference>
<gene>
    <name type="primary">accB</name>
</gene>
<keyword id="KW-0092">Biotin</keyword>
<keyword id="KW-0150">Chloroplast</keyword>
<keyword id="KW-0275">Fatty acid biosynthesis</keyword>
<keyword id="KW-0276">Fatty acid metabolism</keyword>
<keyword id="KW-0444">Lipid biosynthesis</keyword>
<keyword id="KW-0443">Lipid metabolism</keyword>
<keyword id="KW-0934">Plastid</keyword>
<protein>
    <recommendedName>
        <fullName>Biotin carboxyl carrier protein of acetyl-CoA carboxylase</fullName>
        <shortName>BCCP</shortName>
    </recommendedName>
</protein>
<sequence>MQITIKKLQDLLSSVQRKKIQTLKLKQGKFELLLNKTYKKVNQEIIPSQKSAVLQNSPSTIIKSINNTKKIFCVNEDRTEYATIVSPMVGTFYHSPAPGEKIFVQVGDEVKFNQTVCIIEAMKLMNEIEAEIEGKIIEILVKDGDIVDCGQALMKVET</sequence>
<accession>Q1XDK5</accession>
<geneLocation type="chloroplast"/>